<proteinExistence type="inferred from homology"/>
<evidence type="ECO:0000255" key="1">
    <source>
        <dbReference type="HAMAP-Rule" id="MF_01549"/>
    </source>
</evidence>
<gene>
    <name evidence="1" type="primary">dsrB</name>
    <name type="ordered locus">ECP_1886</name>
</gene>
<feature type="chain" id="PRO_0000300613" description="Protein DsrB">
    <location>
        <begin position="1"/>
        <end position="62"/>
    </location>
</feature>
<sequence>MKVNDRVTVKTDGGPRRPGVVLAVEEFSEGTMYLVSLEDYPLGIWFFNEAGHQDGIFVEKAE</sequence>
<reference key="1">
    <citation type="journal article" date="2006" name="Mol. Microbiol.">
        <title>Role of pathogenicity island-associated integrases in the genome plasticity of uropathogenic Escherichia coli strain 536.</title>
        <authorList>
            <person name="Hochhut B."/>
            <person name="Wilde C."/>
            <person name="Balling G."/>
            <person name="Middendorf B."/>
            <person name="Dobrindt U."/>
            <person name="Brzuszkiewicz E."/>
            <person name="Gottschalk G."/>
            <person name="Carniel E."/>
            <person name="Hacker J."/>
        </authorList>
    </citation>
    <scope>NUCLEOTIDE SEQUENCE [LARGE SCALE GENOMIC DNA]</scope>
    <source>
        <strain>536 / UPEC</strain>
    </source>
</reference>
<name>DSRB_ECOL5</name>
<comment type="similarity">
    <text evidence="1">Belongs to the DsrB family.</text>
</comment>
<dbReference type="EMBL" id="CP000247">
    <property type="protein sequence ID" value="ABG69887.1"/>
    <property type="molecule type" value="Genomic_DNA"/>
</dbReference>
<dbReference type="RefSeq" id="WP_000867217.1">
    <property type="nucleotide sequence ID" value="NC_008253.1"/>
</dbReference>
<dbReference type="SMR" id="Q0TGP2"/>
<dbReference type="GeneID" id="93775233"/>
<dbReference type="KEGG" id="ecp:ECP_1886"/>
<dbReference type="HOGENOM" id="CLU_189289_0_0_6"/>
<dbReference type="Proteomes" id="UP000009182">
    <property type="component" value="Chromosome"/>
</dbReference>
<dbReference type="HAMAP" id="MF_01549">
    <property type="entry name" value="DsrB"/>
    <property type="match status" value="1"/>
</dbReference>
<dbReference type="InterPro" id="IPR019717">
    <property type="entry name" value="Dextransucrase_DSRB"/>
</dbReference>
<dbReference type="NCBIfam" id="NF007981">
    <property type="entry name" value="PRK10708.1"/>
    <property type="match status" value="1"/>
</dbReference>
<dbReference type="Pfam" id="PF10781">
    <property type="entry name" value="DSRB"/>
    <property type="match status" value="1"/>
</dbReference>
<organism>
    <name type="scientific">Escherichia coli O6:K15:H31 (strain 536 / UPEC)</name>
    <dbReference type="NCBI Taxonomy" id="362663"/>
    <lineage>
        <taxon>Bacteria</taxon>
        <taxon>Pseudomonadati</taxon>
        <taxon>Pseudomonadota</taxon>
        <taxon>Gammaproteobacteria</taxon>
        <taxon>Enterobacterales</taxon>
        <taxon>Enterobacteriaceae</taxon>
        <taxon>Escherichia</taxon>
    </lineage>
</organism>
<accession>Q0TGP2</accession>
<protein>
    <recommendedName>
        <fullName evidence="1">Protein DsrB</fullName>
    </recommendedName>
</protein>